<name>Y1890_BURO1</name>
<evidence type="ECO:0000255" key="1">
    <source>
        <dbReference type="PROSITE-ProRule" id="PRU01182"/>
    </source>
</evidence>
<evidence type="ECO:0000256" key="2">
    <source>
        <dbReference type="SAM" id="MobiDB-lite"/>
    </source>
</evidence>
<evidence type="ECO:0000305" key="3"/>
<dbReference type="EMBL" id="CP000378">
    <property type="protein sequence ID" value="ABF76793.1"/>
    <property type="molecule type" value="Genomic_DNA"/>
</dbReference>
<dbReference type="SMR" id="Q1BUB2"/>
<dbReference type="HOGENOM" id="CLU_073529_0_0_4"/>
<dbReference type="GO" id="GO:0046872">
    <property type="term" value="F:metal ion binding"/>
    <property type="evidence" value="ECO:0007669"/>
    <property type="project" value="UniProtKB-KW"/>
</dbReference>
<dbReference type="GO" id="GO:0008237">
    <property type="term" value="F:metallopeptidase activity"/>
    <property type="evidence" value="ECO:0007669"/>
    <property type="project" value="UniProtKB-KW"/>
</dbReference>
<dbReference type="GO" id="GO:0006508">
    <property type="term" value="P:proteolysis"/>
    <property type="evidence" value="ECO:0007669"/>
    <property type="project" value="UniProtKB-KW"/>
</dbReference>
<dbReference type="CDD" id="cd08071">
    <property type="entry name" value="MPN_DUF2466"/>
    <property type="match status" value="1"/>
</dbReference>
<dbReference type="Gene3D" id="1.10.150.20">
    <property type="entry name" value="5' to 3' exonuclease, C-terminal subdomain"/>
    <property type="match status" value="1"/>
</dbReference>
<dbReference type="Gene3D" id="3.40.140.10">
    <property type="entry name" value="Cytidine Deaminase, domain 2"/>
    <property type="match status" value="1"/>
</dbReference>
<dbReference type="InterPro" id="IPR037518">
    <property type="entry name" value="MPN"/>
</dbReference>
<dbReference type="InterPro" id="IPR025657">
    <property type="entry name" value="RadC_JAB"/>
</dbReference>
<dbReference type="InterPro" id="IPR010994">
    <property type="entry name" value="RuvA_2-like"/>
</dbReference>
<dbReference type="InterPro" id="IPR001405">
    <property type="entry name" value="UPF0758"/>
</dbReference>
<dbReference type="InterPro" id="IPR020891">
    <property type="entry name" value="UPF0758_CS"/>
</dbReference>
<dbReference type="InterPro" id="IPR046778">
    <property type="entry name" value="UPF0758_N"/>
</dbReference>
<dbReference type="NCBIfam" id="NF000642">
    <property type="entry name" value="PRK00024.1"/>
    <property type="match status" value="1"/>
</dbReference>
<dbReference type="NCBIfam" id="TIGR00608">
    <property type="entry name" value="radc"/>
    <property type="match status" value="1"/>
</dbReference>
<dbReference type="PANTHER" id="PTHR30471">
    <property type="entry name" value="DNA REPAIR PROTEIN RADC"/>
    <property type="match status" value="1"/>
</dbReference>
<dbReference type="PANTHER" id="PTHR30471:SF3">
    <property type="entry name" value="UPF0758 PROTEIN YEES-RELATED"/>
    <property type="match status" value="1"/>
</dbReference>
<dbReference type="Pfam" id="PF04002">
    <property type="entry name" value="RadC"/>
    <property type="match status" value="1"/>
</dbReference>
<dbReference type="Pfam" id="PF20582">
    <property type="entry name" value="UPF0758_N"/>
    <property type="match status" value="1"/>
</dbReference>
<dbReference type="SUPFAM" id="SSF102712">
    <property type="entry name" value="JAB1/MPN domain"/>
    <property type="match status" value="1"/>
</dbReference>
<dbReference type="SUPFAM" id="SSF47781">
    <property type="entry name" value="RuvA domain 2-like"/>
    <property type="match status" value="1"/>
</dbReference>
<dbReference type="PROSITE" id="PS50249">
    <property type="entry name" value="MPN"/>
    <property type="match status" value="1"/>
</dbReference>
<dbReference type="PROSITE" id="PS01302">
    <property type="entry name" value="UPF0758"/>
    <property type="match status" value="1"/>
</dbReference>
<proteinExistence type="inferred from homology"/>
<sequence>MLSPCPILPSAECRDTADTPADPPGRVIPINRRRRRPGDWRPERPRERLLERGPAALTDDELIALLLGTGKPGHDVFVTARALVDQFGTLHGLLEATADDFEAHPGIGPARSARLVAVTEIARRMLVEKAEERMQIDSPGAVEDCLRLKIGTRQYEVFIAVYLDARNRLIDMEEIARGSLTRMAVYPREIVRRAMKHNAAALIVAHNHPSGAVQPSAEDRRLTRVLKDALELVDVRLLDHVVVGVSDTFSFARAGWL</sequence>
<comment type="similarity">
    <text evidence="3">Belongs to the UPF0758 family.</text>
</comment>
<accession>Q1BUB2</accession>
<reference key="1">
    <citation type="submission" date="2006-05" db="EMBL/GenBank/DDBJ databases">
        <title>Complete sequence of chromosome 1 of Burkholderia cenocepacia AU 1054.</title>
        <authorList>
            <consortium name="US DOE Joint Genome Institute"/>
            <person name="Copeland A."/>
            <person name="Lucas S."/>
            <person name="Lapidus A."/>
            <person name="Barry K."/>
            <person name="Detter J.C."/>
            <person name="Glavina del Rio T."/>
            <person name="Hammon N."/>
            <person name="Israni S."/>
            <person name="Dalin E."/>
            <person name="Tice H."/>
            <person name="Pitluck S."/>
            <person name="Chain P."/>
            <person name="Malfatti S."/>
            <person name="Shin M."/>
            <person name="Vergez L."/>
            <person name="Schmutz J."/>
            <person name="Larimer F."/>
            <person name="Land M."/>
            <person name="Hauser L."/>
            <person name="Kyrpides N."/>
            <person name="Lykidis A."/>
            <person name="LiPuma J.J."/>
            <person name="Konstantinidis K."/>
            <person name="Tiedje J.M."/>
            <person name="Richardson P."/>
        </authorList>
    </citation>
    <scope>NUCLEOTIDE SEQUENCE [LARGE SCALE GENOMIC DNA]</scope>
    <source>
        <strain>AU 1054</strain>
    </source>
</reference>
<organism>
    <name type="scientific">Burkholderia orbicola (strain AU 1054)</name>
    <dbReference type="NCBI Taxonomy" id="331271"/>
    <lineage>
        <taxon>Bacteria</taxon>
        <taxon>Pseudomonadati</taxon>
        <taxon>Pseudomonadota</taxon>
        <taxon>Betaproteobacteria</taxon>
        <taxon>Burkholderiales</taxon>
        <taxon>Burkholderiaceae</taxon>
        <taxon>Burkholderia</taxon>
        <taxon>Burkholderia cepacia complex</taxon>
        <taxon>Burkholderia orbicola</taxon>
    </lineage>
</organism>
<feature type="chain" id="PRO_0000322668" description="UPF0758 protein Bcen_1890">
    <location>
        <begin position="1"/>
        <end position="257"/>
    </location>
</feature>
<feature type="domain" description="MPN" evidence="1">
    <location>
        <begin position="135"/>
        <end position="257"/>
    </location>
</feature>
<feature type="region of interest" description="Disordered" evidence="2">
    <location>
        <begin position="1"/>
        <end position="53"/>
    </location>
</feature>
<feature type="short sequence motif" description="JAMM motif" evidence="1">
    <location>
        <begin position="206"/>
        <end position="219"/>
    </location>
</feature>
<feature type="compositionally biased region" description="Basic and acidic residues" evidence="2">
    <location>
        <begin position="37"/>
        <end position="51"/>
    </location>
</feature>
<feature type="binding site" evidence="1">
    <location>
        <position position="206"/>
    </location>
    <ligand>
        <name>Zn(2+)</name>
        <dbReference type="ChEBI" id="CHEBI:29105"/>
        <note>catalytic</note>
    </ligand>
</feature>
<feature type="binding site" evidence="1">
    <location>
        <position position="208"/>
    </location>
    <ligand>
        <name>Zn(2+)</name>
        <dbReference type="ChEBI" id="CHEBI:29105"/>
        <note>catalytic</note>
    </ligand>
</feature>
<feature type="binding site" evidence="1">
    <location>
        <position position="219"/>
    </location>
    <ligand>
        <name>Zn(2+)</name>
        <dbReference type="ChEBI" id="CHEBI:29105"/>
        <note>catalytic</note>
    </ligand>
</feature>
<keyword id="KW-0378">Hydrolase</keyword>
<keyword id="KW-0479">Metal-binding</keyword>
<keyword id="KW-0482">Metalloprotease</keyword>
<keyword id="KW-0645">Protease</keyword>
<keyword id="KW-0862">Zinc</keyword>
<gene>
    <name type="ordered locus">Bcen_1890</name>
</gene>
<protein>
    <recommendedName>
        <fullName>UPF0758 protein Bcen_1890</fullName>
    </recommendedName>
</protein>